<keyword id="KW-0285">Flavoprotein</keyword>
<keyword id="KW-0288">FMN</keyword>
<keyword id="KW-1185">Reference proteome</keyword>
<protein>
    <recommendedName>
        <fullName>Uncharacterized protein aq_928</fullName>
    </recommendedName>
</protein>
<sequence>MEFVVKETDGDTLYKLVLGLVVPRPIGWVSTISKDGILNIAPFSFFNVVNDEPPVLMISVSNRDDNTLKDTVKNVLDTKEFVVNMVSEEVFEKMLITGEEFPPEVNEFEKAGLTPETSKFVKAPRIKEAKVSFECKLYKYVPVYDMHVIFGEALLIKVEDTILDENLNVNYEKYRPIGRLGGKYYVKAFGECKLKV</sequence>
<reference key="1">
    <citation type="journal article" date="1998" name="Nature">
        <title>The complete genome of the hyperthermophilic bacterium Aquifex aeolicus.</title>
        <authorList>
            <person name="Deckert G."/>
            <person name="Warren P.V."/>
            <person name="Gaasterland T."/>
            <person name="Young W.G."/>
            <person name="Lenox A.L."/>
            <person name="Graham D.E."/>
            <person name="Overbeek R."/>
            <person name="Snead M.A."/>
            <person name="Keller M."/>
            <person name="Aujay M."/>
            <person name="Huber R."/>
            <person name="Feldman R.A."/>
            <person name="Short J.M."/>
            <person name="Olsen G.J."/>
            <person name="Swanson R.V."/>
        </authorList>
    </citation>
    <scope>NUCLEOTIDE SEQUENCE [LARGE SCALE GENOMIC DNA]</scope>
    <source>
        <strain>VF5</strain>
    </source>
</reference>
<name>Y928_AQUAE</name>
<evidence type="ECO:0000250" key="1"/>
<evidence type="ECO:0000305" key="2"/>
<comment type="cofactor">
    <cofactor evidence="1">
        <name>FMN</name>
        <dbReference type="ChEBI" id="CHEBI:58210"/>
    </cofactor>
</comment>
<comment type="similarity">
    <text evidence="2">Belongs to the flavoredoxin family.</text>
</comment>
<organism>
    <name type="scientific">Aquifex aeolicus (strain VF5)</name>
    <dbReference type="NCBI Taxonomy" id="224324"/>
    <lineage>
        <taxon>Bacteria</taxon>
        <taxon>Pseudomonadati</taxon>
        <taxon>Aquificota</taxon>
        <taxon>Aquificia</taxon>
        <taxon>Aquificales</taxon>
        <taxon>Aquificaceae</taxon>
        <taxon>Aquifex</taxon>
    </lineage>
</organism>
<accession>O67071</accession>
<dbReference type="EMBL" id="AE000657">
    <property type="protein sequence ID" value="AAC07037.1"/>
    <property type="molecule type" value="Genomic_DNA"/>
</dbReference>
<dbReference type="PIR" id="D70380">
    <property type="entry name" value="D70380"/>
</dbReference>
<dbReference type="RefSeq" id="NP_213633.1">
    <property type="nucleotide sequence ID" value="NC_000918.1"/>
</dbReference>
<dbReference type="RefSeq" id="WP_010880571.1">
    <property type="nucleotide sequence ID" value="NC_000918.1"/>
</dbReference>
<dbReference type="SMR" id="O67071"/>
<dbReference type="STRING" id="224324.aq_928"/>
<dbReference type="EnsemblBacteria" id="AAC07037">
    <property type="protein sequence ID" value="AAC07037"/>
    <property type="gene ID" value="aq_928"/>
</dbReference>
<dbReference type="KEGG" id="aae:aq_928"/>
<dbReference type="PATRIC" id="fig|224324.8.peg.726"/>
<dbReference type="eggNOG" id="COG1853">
    <property type="taxonomic scope" value="Bacteria"/>
</dbReference>
<dbReference type="HOGENOM" id="CLU_059021_3_1_0"/>
<dbReference type="InParanoid" id="O67071"/>
<dbReference type="OrthoDB" id="9794638at2"/>
<dbReference type="Proteomes" id="UP000000798">
    <property type="component" value="Chromosome"/>
</dbReference>
<dbReference type="GO" id="GO:0010181">
    <property type="term" value="F:FMN binding"/>
    <property type="evidence" value="ECO:0007669"/>
    <property type="project" value="InterPro"/>
</dbReference>
<dbReference type="GO" id="GO:0016646">
    <property type="term" value="F:oxidoreductase activity, acting on the CH-NH group of donors, NAD or NADP as acceptor"/>
    <property type="evidence" value="ECO:0007669"/>
    <property type="project" value="UniProtKB-ARBA"/>
</dbReference>
<dbReference type="Gene3D" id="2.30.110.10">
    <property type="entry name" value="Electron Transport, Fmn-binding Protein, Chain A"/>
    <property type="match status" value="1"/>
</dbReference>
<dbReference type="InterPro" id="IPR002563">
    <property type="entry name" value="Flavin_Rdtase-like_dom"/>
</dbReference>
<dbReference type="InterPro" id="IPR012349">
    <property type="entry name" value="Split_barrel_FMN-bd"/>
</dbReference>
<dbReference type="PANTHER" id="PTHR33798:SF5">
    <property type="entry name" value="FLAVIN REDUCTASE LIKE DOMAIN-CONTAINING PROTEIN"/>
    <property type="match status" value="1"/>
</dbReference>
<dbReference type="PANTHER" id="PTHR33798">
    <property type="entry name" value="FLAVOPROTEIN OXYGENASE"/>
    <property type="match status" value="1"/>
</dbReference>
<dbReference type="Pfam" id="PF01613">
    <property type="entry name" value="Flavin_Reduct"/>
    <property type="match status" value="1"/>
</dbReference>
<dbReference type="SMART" id="SM00903">
    <property type="entry name" value="Flavin_Reduct"/>
    <property type="match status" value="1"/>
</dbReference>
<dbReference type="SUPFAM" id="SSF50475">
    <property type="entry name" value="FMN-binding split barrel"/>
    <property type="match status" value="1"/>
</dbReference>
<proteinExistence type="inferred from homology"/>
<feature type="chain" id="PRO_0000085521" description="Uncharacterized protein aq_928">
    <location>
        <begin position="1"/>
        <end position="196"/>
    </location>
</feature>
<gene>
    <name type="ordered locus">aq_928</name>
</gene>